<evidence type="ECO:0000255" key="1"/>
<evidence type="ECO:0000255" key="2">
    <source>
        <dbReference type="PROSITE-ProRule" id="PRU00202"/>
    </source>
</evidence>
<evidence type="ECO:0000305" key="3"/>
<comment type="subcellular location">
    <subcellularLocation>
        <location evidence="3">Membrane</location>
        <topology evidence="3">Single-pass membrane protein</topology>
    </subcellularLocation>
</comment>
<comment type="similarity">
    <text evidence="3">Belongs to the syntaxin family.</text>
</comment>
<keyword id="KW-0175">Coiled coil</keyword>
<keyword id="KW-0472">Membrane</keyword>
<keyword id="KW-1185">Reference proteome</keyword>
<keyword id="KW-0812">Transmembrane</keyword>
<keyword id="KW-1133">Transmembrane helix</keyword>
<proteinExistence type="inferred from homology"/>
<organism>
    <name type="scientific">Dictyostelium discoideum</name>
    <name type="common">Social amoeba</name>
    <dbReference type="NCBI Taxonomy" id="44689"/>
    <lineage>
        <taxon>Eukaryota</taxon>
        <taxon>Amoebozoa</taxon>
        <taxon>Evosea</taxon>
        <taxon>Eumycetozoa</taxon>
        <taxon>Dictyostelia</taxon>
        <taxon>Dictyosteliales</taxon>
        <taxon>Dictyosteliaceae</taxon>
        <taxon>Dictyostelium</taxon>
    </lineage>
</organism>
<sequence length="250" mass="28480">MGDYWLNEHDNIVKLINSLTADIKEYSIQQRNNPGIVQKNTPAKLRNGLVHITNEILRLQDSLTYGNNRNIQEKELLRRKNKVESLISMKNQLNSTLDAAINNTSQKNELMGNNNGVGIGYSNRQFGKPKETEATKQFDNQQLFTNQQHIMREQDESLDLLSQSIMRQKNMAHAMSNELDQHNEMLDDVEIGTDAVSMRLRNANRRMETIKQNAGSTCMIVCIVILIILIVVLIATDSGCKIYNDPKHCP</sequence>
<accession>Q54IX6</accession>
<protein>
    <recommendedName>
        <fullName>Probable syntaxin-8B</fullName>
    </recommendedName>
</protein>
<name>STX8B_DICDI</name>
<dbReference type="EMBL" id="AAFI02000111">
    <property type="protein sequence ID" value="EAL63245.1"/>
    <property type="molecule type" value="Genomic_DNA"/>
</dbReference>
<dbReference type="RefSeq" id="XP_636754.1">
    <property type="nucleotide sequence ID" value="XM_631662.1"/>
</dbReference>
<dbReference type="SMR" id="Q54IX6"/>
<dbReference type="FunCoup" id="Q54IX6">
    <property type="interactions" value="79"/>
</dbReference>
<dbReference type="STRING" id="44689.Q54IX6"/>
<dbReference type="PaxDb" id="44689-DDB0231545"/>
<dbReference type="EnsemblProtists" id="EAL63245">
    <property type="protein sequence ID" value="EAL63245"/>
    <property type="gene ID" value="DDB_G0288439"/>
</dbReference>
<dbReference type="GeneID" id="8626632"/>
<dbReference type="KEGG" id="ddi:DDB_G0288439"/>
<dbReference type="dictyBase" id="DDB_G0288439">
    <property type="gene designation" value="syn8B"/>
</dbReference>
<dbReference type="VEuPathDB" id="AmoebaDB:DDB_G0288439"/>
<dbReference type="eggNOG" id="KOG3202">
    <property type="taxonomic scope" value="Eukaryota"/>
</dbReference>
<dbReference type="HOGENOM" id="CLU_099972_0_0_1"/>
<dbReference type="InParanoid" id="Q54IX6"/>
<dbReference type="OMA" id="DSTCYIA"/>
<dbReference type="PhylomeDB" id="Q54IX6"/>
<dbReference type="PRO" id="PR:Q54IX6"/>
<dbReference type="Proteomes" id="UP000002195">
    <property type="component" value="Chromosome 5"/>
</dbReference>
<dbReference type="GO" id="GO:0012505">
    <property type="term" value="C:endomembrane system"/>
    <property type="evidence" value="ECO:0000318"/>
    <property type="project" value="GO_Central"/>
</dbReference>
<dbReference type="GO" id="GO:0031201">
    <property type="term" value="C:SNARE complex"/>
    <property type="evidence" value="ECO:0000318"/>
    <property type="project" value="GO_Central"/>
</dbReference>
<dbReference type="GO" id="GO:0005484">
    <property type="term" value="F:SNAP receptor activity"/>
    <property type="evidence" value="ECO:0000318"/>
    <property type="project" value="GO_Central"/>
</dbReference>
<dbReference type="GO" id="GO:0000149">
    <property type="term" value="F:SNARE binding"/>
    <property type="evidence" value="ECO:0000318"/>
    <property type="project" value="GO_Central"/>
</dbReference>
<dbReference type="GO" id="GO:0006971">
    <property type="term" value="P:hypotonic response"/>
    <property type="evidence" value="ECO:0007007"/>
    <property type="project" value="dictyBase"/>
</dbReference>
<dbReference type="GO" id="GO:0006886">
    <property type="term" value="P:intracellular protein transport"/>
    <property type="evidence" value="ECO:0000318"/>
    <property type="project" value="GO_Central"/>
</dbReference>
<dbReference type="GO" id="GO:0048278">
    <property type="term" value="P:vesicle docking"/>
    <property type="evidence" value="ECO:0000318"/>
    <property type="project" value="GO_Central"/>
</dbReference>
<dbReference type="GO" id="GO:0006906">
    <property type="term" value="P:vesicle fusion"/>
    <property type="evidence" value="ECO:0000318"/>
    <property type="project" value="GO_Central"/>
</dbReference>
<dbReference type="CDD" id="cd15841">
    <property type="entry name" value="SNARE_Qc"/>
    <property type="match status" value="1"/>
</dbReference>
<dbReference type="Gene3D" id="1.20.5.110">
    <property type="match status" value="1"/>
</dbReference>
<dbReference type="InterPro" id="IPR045242">
    <property type="entry name" value="Syntaxin"/>
</dbReference>
<dbReference type="InterPro" id="IPR000727">
    <property type="entry name" value="T_SNARE_dom"/>
</dbReference>
<dbReference type="PANTHER" id="PTHR19957">
    <property type="entry name" value="SYNTAXIN"/>
    <property type="match status" value="1"/>
</dbReference>
<dbReference type="PANTHER" id="PTHR19957:SF422">
    <property type="entry name" value="SYNTAXIN-8B-RELATED"/>
    <property type="match status" value="1"/>
</dbReference>
<dbReference type="SMART" id="SM00397">
    <property type="entry name" value="t_SNARE"/>
    <property type="match status" value="1"/>
</dbReference>
<dbReference type="SUPFAM" id="SSF58038">
    <property type="entry name" value="SNARE fusion complex"/>
    <property type="match status" value="1"/>
</dbReference>
<dbReference type="PROSITE" id="PS50192">
    <property type="entry name" value="T_SNARE"/>
    <property type="match status" value="1"/>
</dbReference>
<feature type="chain" id="PRO_0000319999" description="Probable syntaxin-8B">
    <location>
        <begin position="1"/>
        <end position="250"/>
    </location>
</feature>
<feature type="topological domain" description="Cytoplasmic" evidence="1">
    <location>
        <begin position="1"/>
        <end position="213"/>
    </location>
</feature>
<feature type="transmembrane region" description="Helical; Anchor for type IV membrane protein">
    <location>
        <begin position="214"/>
        <end position="234"/>
    </location>
</feature>
<feature type="topological domain" description="Vesicular" evidence="1">
    <location>
        <begin position="235"/>
        <end position="250"/>
    </location>
</feature>
<feature type="domain" description="t-SNARE coiled-coil homology" evidence="2">
    <location>
        <begin position="148"/>
        <end position="210"/>
    </location>
</feature>
<feature type="coiled-coil region" evidence="1">
    <location>
        <begin position="73"/>
        <end position="100"/>
    </location>
</feature>
<gene>
    <name type="primary">syn8B</name>
    <name type="ORF">DDB_G0288439</name>
</gene>
<reference key="1">
    <citation type="journal article" date="2005" name="Nature">
        <title>The genome of the social amoeba Dictyostelium discoideum.</title>
        <authorList>
            <person name="Eichinger L."/>
            <person name="Pachebat J.A."/>
            <person name="Gloeckner G."/>
            <person name="Rajandream M.A."/>
            <person name="Sucgang R."/>
            <person name="Berriman M."/>
            <person name="Song J."/>
            <person name="Olsen R."/>
            <person name="Szafranski K."/>
            <person name="Xu Q."/>
            <person name="Tunggal B."/>
            <person name="Kummerfeld S."/>
            <person name="Madera M."/>
            <person name="Konfortov B.A."/>
            <person name="Rivero F."/>
            <person name="Bankier A.T."/>
            <person name="Lehmann R."/>
            <person name="Hamlin N."/>
            <person name="Davies R."/>
            <person name="Gaudet P."/>
            <person name="Fey P."/>
            <person name="Pilcher K."/>
            <person name="Chen G."/>
            <person name="Saunders D."/>
            <person name="Sodergren E.J."/>
            <person name="Davis P."/>
            <person name="Kerhornou A."/>
            <person name="Nie X."/>
            <person name="Hall N."/>
            <person name="Anjard C."/>
            <person name="Hemphill L."/>
            <person name="Bason N."/>
            <person name="Farbrother P."/>
            <person name="Desany B."/>
            <person name="Just E."/>
            <person name="Morio T."/>
            <person name="Rost R."/>
            <person name="Churcher C.M."/>
            <person name="Cooper J."/>
            <person name="Haydock S."/>
            <person name="van Driessche N."/>
            <person name="Cronin A."/>
            <person name="Goodhead I."/>
            <person name="Muzny D.M."/>
            <person name="Mourier T."/>
            <person name="Pain A."/>
            <person name="Lu M."/>
            <person name="Harper D."/>
            <person name="Lindsay R."/>
            <person name="Hauser H."/>
            <person name="James K.D."/>
            <person name="Quiles M."/>
            <person name="Madan Babu M."/>
            <person name="Saito T."/>
            <person name="Buchrieser C."/>
            <person name="Wardroper A."/>
            <person name="Felder M."/>
            <person name="Thangavelu M."/>
            <person name="Johnson D."/>
            <person name="Knights A."/>
            <person name="Loulseged H."/>
            <person name="Mungall K.L."/>
            <person name="Oliver K."/>
            <person name="Price C."/>
            <person name="Quail M.A."/>
            <person name="Urushihara H."/>
            <person name="Hernandez J."/>
            <person name="Rabbinowitsch E."/>
            <person name="Steffen D."/>
            <person name="Sanders M."/>
            <person name="Ma J."/>
            <person name="Kohara Y."/>
            <person name="Sharp S."/>
            <person name="Simmonds M.N."/>
            <person name="Spiegler S."/>
            <person name="Tivey A."/>
            <person name="Sugano S."/>
            <person name="White B."/>
            <person name="Walker D."/>
            <person name="Woodward J.R."/>
            <person name="Winckler T."/>
            <person name="Tanaka Y."/>
            <person name="Shaulsky G."/>
            <person name="Schleicher M."/>
            <person name="Weinstock G.M."/>
            <person name="Rosenthal A."/>
            <person name="Cox E.C."/>
            <person name="Chisholm R.L."/>
            <person name="Gibbs R.A."/>
            <person name="Loomis W.F."/>
            <person name="Platzer M."/>
            <person name="Kay R.R."/>
            <person name="Williams J.G."/>
            <person name="Dear P.H."/>
            <person name="Noegel A.A."/>
            <person name="Barrell B.G."/>
            <person name="Kuspa A."/>
        </authorList>
    </citation>
    <scope>NUCLEOTIDE SEQUENCE [LARGE SCALE GENOMIC DNA]</scope>
    <source>
        <strain>AX4</strain>
    </source>
</reference>